<sequence length="106" mass="12179">MGKTNDWLDFDQLAEEKVRDALKPPSMYKVILVNDDYTPMEFVIDVLQKFFSYDVERATQLMLAVHYQGKAICGVFTAEVAETKVAMVNKYARENEHPLLCTLEKA</sequence>
<gene>
    <name evidence="1" type="primary">clpS</name>
    <name type="ordered locus">EcSMS35_2279</name>
</gene>
<accession>B1LKM9</accession>
<comment type="function">
    <text evidence="1">Involved in the modulation of the specificity of the ClpAP-mediated ATP-dependent protein degradation.</text>
</comment>
<comment type="subunit">
    <text evidence="1">Binds to the N-terminal domain of the chaperone ClpA.</text>
</comment>
<comment type="similarity">
    <text evidence="1">Belongs to the ClpS family.</text>
</comment>
<reference key="1">
    <citation type="journal article" date="2008" name="J. Bacteriol.">
        <title>Insights into the environmental resistance gene pool from the genome sequence of the multidrug-resistant environmental isolate Escherichia coli SMS-3-5.</title>
        <authorList>
            <person name="Fricke W.F."/>
            <person name="Wright M.S."/>
            <person name="Lindell A.H."/>
            <person name="Harkins D.M."/>
            <person name="Baker-Austin C."/>
            <person name="Ravel J."/>
            <person name="Stepanauskas R."/>
        </authorList>
    </citation>
    <scope>NUCLEOTIDE SEQUENCE [LARGE SCALE GENOMIC DNA]</scope>
    <source>
        <strain>SMS-3-5 / SECEC</strain>
    </source>
</reference>
<dbReference type="EMBL" id="CP000970">
    <property type="protein sequence ID" value="ACB19799.1"/>
    <property type="molecule type" value="Genomic_DNA"/>
</dbReference>
<dbReference type="RefSeq" id="WP_000520781.1">
    <property type="nucleotide sequence ID" value="NC_010498.1"/>
</dbReference>
<dbReference type="SMR" id="B1LKM9"/>
<dbReference type="GeneID" id="86863397"/>
<dbReference type="KEGG" id="ecm:EcSMS35_2279"/>
<dbReference type="HOGENOM" id="CLU_134358_2_1_6"/>
<dbReference type="Proteomes" id="UP000007011">
    <property type="component" value="Chromosome"/>
</dbReference>
<dbReference type="GO" id="GO:0030163">
    <property type="term" value="P:protein catabolic process"/>
    <property type="evidence" value="ECO:0007669"/>
    <property type="project" value="InterPro"/>
</dbReference>
<dbReference type="GO" id="GO:0006508">
    <property type="term" value="P:proteolysis"/>
    <property type="evidence" value="ECO:0007669"/>
    <property type="project" value="UniProtKB-UniRule"/>
</dbReference>
<dbReference type="FunFam" id="3.30.1390.10:FF:000002">
    <property type="entry name" value="ATP-dependent Clp protease adapter protein ClpS"/>
    <property type="match status" value="1"/>
</dbReference>
<dbReference type="Gene3D" id="3.30.1390.10">
    <property type="match status" value="1"/>
</dbReference>
<dbReference type="HAMAP" id="MF_00302">
    <property type="entry name" value="ClpS"/>
    <property type="match status" value="1"/>
</dbReference>
<dbReference type="InterPro" id="IPR022935">
    <property type="entry name" value="ClpS"/>
</dbReference>
<dbReference type="InterPro" id="IPR003769">
    <property type="entry name" value="ClpS_core"/>
</dbReference>
<dbReference type="InterPro" id="IPR014719">
    <property type="entry name" value="Ribosomal_bL12_C/ClpS-like"/>
</dbReference>
<dbReference type="NCBIfam" id="NF000670">
    <property type="entry name" value="PRK00033.1-3"/>
    <property type="match status" value="1"/>
</dbReference>
<dbReference type="NCBIfam" id="NF000672">
    <property type="entry name" value="PRK00033.1-5"/>
    <property type="match status" value="1"/>
</dbReference>
<dbReference type="PANTHER" id="PTHR33473:SF19">
    <property type="entry name" value="ATP-DEPENDENT CLP PROTEASE ADAPTER PROTEIN CLPS"/>
    <property type="match status" value="1"/>
</dbReference>
<dbReference type="PANTHER" id="PTHR33473">
    <property type="entry name" value="ATP-DEPENDENT CLP PROTEASE ADAPTER PROTEIN CLPS1, CHLOROPLASTIC"/>
    <property type="match status" value="1"/>
</dbReference>
<dbReference type="Pfam" id="PF02617">
    <property type="entry name" value="ClpS"/>
    <property type="match status" value="1"/>
</dbReference>
<dbReference type="SUPFAM" id="SSF54736">
    <property type="entry name" value="ClpS-like"/>
    <property type="match status" value="1"/>
</dbReference>
<organism>
    <name type="scientific">Escherichia coli (strain SMS-3-5 / SECEC)</name>
    <dbReference type="NCBI Taxonomy" id="439855"/>
    <lineage>
        <taxon>Bacteria</taxon>
        <taxon>Pseudomonadati</taxon>
        <taxon>Pseudomonadota</taxon>
        <taxon>Gammaproteobacteria</taxon>
        <taxon>Enterobacterales</taxon>
        <taxon>Enterobacteriaceae</taxon>
        <taxon>Escherichia</taxon>
    </lineage>
</organism>
<name>CLPS_ECOSM</name>
<protein>
    <recommendedName>
        <fullName evidence="1">ATP-dependent Clp protease adapter protein ClpS</fullName>
    </recommendedName>
</protein>
<feature type="chain" id="PRO_1000119502" description="ATP-dependent Clp protease adapter protein ClpS">
    <location>
        <begin position="1"/>
        <end position="106"/>
    </location>
</feature>
<proteinExistence type="inferred from homology"/>
<evidence type="ECO:0000255" key="1">
    <source>
        <dbReference type="HAMAP-Rule" id="MF_00302"/>
    </source>
</evidence>